<gene>
    <name type="primary">Cap</name>
</gene>
<protein>
    <recommendedName>
        <fullName>Probable capsid protein</fullName>
    </recommendedName>
</protein>
<reference key="1">
    <citation type="journal article" date="2000" name="Arch. Virol.">
        <title>Cloning and sequencing of columbid circovirus (coCV), a new circovirus from pigeons.</title>
        <authorList>
            <person name="Mankertz A."/>
            <person name="Hattermann K."/>
            <person name="Ehlers B."/>
            <person name="Soike D."/>
        </authorList>
    </citation>
    <scope>NUCLEOTIDE SEQUENCE [GENOMIC DNA]</scope>
</reference>
<organism>
    <name type="scientific">Pigeon circovirus</name>
    <name type="common">PiCV</name>
    <name type="synonym">Columbid circovirus</name>
    <dbReference type="NCBI Taxonomy" id="126070"/>
    <lineage>
        <taxon>Viruses</taxon>
        <taxon>Monodnaviria</taxon>
        <taxon>Shotokuvirae</taxon>
        <taxon>Cressdnaviricota</taxon>
        <taxon>Arfiviricetes</taxon>
        <taxon>Cirlivirales</taxon>
        <taxon>Circoviridae</taxon>
        <taxon>Circovirus</taxon>
        <taxon>Circovirus pigeon</taxon>
        <taxon>Pigeon circovirus</taxon>
    </lineage>
</organism>
<dbReference type="EMBL" id="AF252610">
    <property type="protein sequence ID" value="AAF74197.1"/>
    <property type="molecule type" value="Genomic_DNA"/>
</dbReference>
<dbReference type="RefSeq" id="NP_059530.1">
    <property type="nucleotide sequence ID" value="NC_002361.1"/>
</dbReference>
<dbReference type="SMR" id="Q9IG42"/>
<dbReference type="GeneID" id="1460802"/>
<dbReference type="KEGG" id="vg:1460802"/>
<dbReference type="OrthoDB" id="7660at10239"/>
<dbReference type="Proteomes" id="UP000000473">
    <property type="component" value="Genome"/>
</dbReference>
<dbReference type="GO" id="GO:0043657">
    <property type="term" value="C:host cell"/>
    <property type="evidence" value="ECO:0007669"/>
    <property type="project" value="GOC"/>
</dbReference>
<dbReference type="GO" id="GO:0042025">
    <property type="term" value="C:host cell nucleus"/>
    <property type="evidence" value="ECO:0007669"/>
    <property type="project" value="UniProtKB-SubCell"/>
</dbReference>
<dbReference type="GO" id="GO:0039615">
    <property type="term" value="C:T=1 icosahedral viral capsid"/>
    <property type="evidence" value="ECO:0007669"/>
    <property type="project" value="UniProtKB-KW"/>
</dbReference>
<dbReference type="GO" id="GO:0003677">
    <property type="term" value="F:DNA binding"/>
    <property type="evidence" value="ECO:0007669"/>
    <property type="project" value="UniProtKB-KW"/>
</dbReference>
<dbReference type="GO" id="GO:0075509">
    <property type="term" value="P:endocytosis involved in viral entry into host cell"/>
    <property type="evidence" value="ECO:0007669"/>
    <property type="project" value="UniProtKB-KW"/>
</dbReference>
<dbReference type="GO" id="GO:0019069">
    <property type="term" value="P:viral capsid assembly"/>
    <property type="evidence" value="ECO:0007669"/>
    <property type="project" value="InterPro"/>
</dbReference>
<dbReference type="GO" id="GO:0075732">
    <property type="term" value="P:viral penetration into host nucleus"/>
    <property type="evidence" value="ECO:0007669"/>
    <property type="project" value="UniProtKB-KW"/>
</dbReference>
<dbReference type="GO" id="GO:0019062">
    <property type="term" value="P:virion attachment to host cell"/>
    <property type="evidence" value="ECO:0007669"/>
    <property type="project" value="UniProtKB-KW"/>
</dbReference>
<dbReference type="Gene3D" id="2.60.120.950">
    <property type="entry name" value="Circovirus capsid protein"/>
    <property type="match status" value="1"/>
</dbReference>
<dbReference type="InterPro" id="IPR003383">
    <property type="entry name" value="Circovirus_capsid"/>
</dbReference>
<dbReference type="InterPro" id="IPR038652">
    <property type="entry name" value="Circovirus_capsid_sf"/>
</dbReference>
<dbReference type="Pfam" id="PF02443">
    <property type="entry name" value="Circo_capsid"/>
    <property type="match status" value="1"/>
</dbReference>
<keyword id="KW-0167">Capsid protein</keyword>
<keyword id="KW-0238">DNA-binding</keyword>
<keyword id="KW-1048">Host nucleus</keyword>
<keyword id="KW-0945">Host-virus interaction</keyword>
<keyword id="KW-1140">T=1 icosahedral capsid protein</keyword>
<keyword id="KW-1161">Viral attachment to host cell</keyword>
<keyword id="KW-1162">Viral penetration into host cytoplasm</keyword>
<keyword id="KW-1163">Viral penetration into host nucleus</keyword>
<keyword id="KW-0946">Virion</keyword>
<keyword id="KW-1164">Virus endocytosis by host</keyword>
<keyword id="KW-1160">Virus entry into host cell</keyword>
<organismHost>
    <name type="scientific">Columba livia</name>
    <name type="common">Rock dove</name>
    <dbReference type="NCBI Taxonomy" id="8932"/>
</organismHost>
<proteinExistence type="inferred from homology"/>
<accession>Q9IG42</accession>
<sequence length="273" mass="31960">MRRRRFRRRRAPIRRRRIRRRRTRLSRNIRGHRRSSRIYYFRLRRKDKITLTQATNDFKFGTGIFTFKLADVLTVGLNAPTLKVPFEDYQIALVKVEMRPLGVDITTWKGFGHTVPMYDARLKTFQGQVDLGDDPLMDFDGARKWDLRKGFKRLIRPRPQLTIADLATANQSAATWFSGRNQWIPLQVSGNSLFPQKVNHYGLAFSYLQPQPDPMYYECEVTFYVKFRQFAWTTLNVPPTPNIEGMELMHICNGDCNQCFADALDPDSAVDSE</sequence>
<feature type="chain" id="PRO_0000319851" description="Probable capsid protein">
    <location>
        <begin position="1"/>
        <end position="273"/>
    </location>
</feature>
<feature type="region of interest" description="DNA-binding" evidence="1">
    <location>
        <begin position="1"/>
        <end position="31"/>
    </location>
</feature>
<feature type="region of interest" description="Nuclear localization signals" evidence="2">
    <location>
        <begin position="7"/>
        <end position="35"/>
    </location>
</feature>
<evidence type="ECO:0000250" key="1"/>
<evidence type="ECO:0000255" key="2"/>
<evidence type="ECO:0000305" key="3"/>
<name>CAPSD_PICV</name>
<comment type="function">
    <text evidence="1">Self-assembles to form the virion icosahedral capsid with a T=1 symmetry. This very small capsid (17 - 22 nm in diameter) allows the virus to be very stable in the environment and resistant to some disinfectants, including detergents. Essential for the initial attachment to heparan sulfate moieties and chondroitin sulfate B of the host cell surface proteoglycans. After attachment, the virus is endocytosed and traffics to the nucleus. The capsid protein binds and transports the viral genome and Rep across the nuclear envelope (By similarity).</text>
</comment>
<comment type="subunit">
    <text evidence="1">Homomultimer. Assembles in the nucleus, presumably in an immature form, then migrates to the cytoplasm once assembled as mature virion. Interacts with Rep; this interaction relocates Rep into the nucleus (By similarity).</text>
</comment>
<comment type="subcellular location">
    <subcellularLocation>
        <location evidence="1">Host nucleus</location>
    </subcellularLocation>
    <subcellularLocation>
        <location evidence="3">Virion</location>
    </subcellularLocation>
</comment>
<comment type="similarity">
    <text evidence="3">Belongs to the circoviridae capsid protein family.</text>
</comment>